<reference key="1">
    <citation type="journal article" date="2001" name="Proc. Natl. Acad. Sci. U.S.A.">
        <title>Analysis of the chromosome sequence of the legume symbiont Sinorhizobium meliloti strain 1021.</title>
        <authorList>
            <person name="Capela D."/>
            <person name="Barloy-Hubler F."/>
            <person name="Gouzy J."/>
            <person name="Bothe G."/>
            <person name="Ampe F."/>
            <person name="Batut J."/>
            <person name="Boistard P."/>
            <person name="Becker A."/>
            <person name="Boutry M."/>
            <person name="Cadieu E."/>
            <person name="Dreano S."/>
            <person name="Gloux S."/>
            <person name="Godrie T."/>
            <person name="Goffeau A."/>
            <person name="Kahn D."/>
            <person name="Kiss E."/>
            <person name="Lelaure V."/>
            <person name="Masuy D."/>
            <person name="Pohl T."/>
            <person name="Portetelle D."/>
            <person name="Puehler A."/>
            <person name="Purnelle B."/>
            <person name="Ramsperger U."/>
            <person name="Renard C."/>
            <person name="Thebault P."/>
            <person name="Vandenbol M."/>
            <person name="Weidner S."/>
            <person name="Galibert F."/>
        </authorList>
    </citation>
    <scope>NUCLEOTIDE SEQUENCE [LARGE SCALE GENOMIC DNA]</scope>
    <source>
        <strain>1021</strain>
    </source>
</reference>
<reference key="2">
    <citation type="journal article" date="2001" name="Science">
        <title>The composite genome of the legume symbiont Sinorhizobium meliloti.</title>
        <authorList>
            <person name="Galibert F."/>
            <person name="Finan T.M."/>
            <person name="Long S.R."/>
            <person name="Puehler A."/>
            <person name="Abola P."/>
            <person name="Ampe F."/>
            <person name="Barloy-Hubler F."/>
            <person name="Barnett M.J."/>
            <person name="Becker A."/>
            <person name="Boistard P."/>
            <person name="Bothe G."/>
            <person name="Boutry M."/>
            <person name="Bowser L."/>
            <person name="Buhrmester J."/>
            <person name="Cadieu E."/>
            <person name="Capela D."/>
            <person name="Chain P."/>
            <person name="Cowie A."/>
            <person name="Davis R.W."/>
            <person name="Dreano S."/>
            <person name="Federspiel N.A."/>
            <person name="Fisher R.F."/>
            <person name="Gloux S."/>
            <person name="Godrie T."/>
            <person name="Goffeau A."/>
            <person name="Golding B."/>
            <person name="Gouzy J."/>
            <person name="Gurjal M."/>
            <person name="Hernandez-Lucas I."/>
            <person name="Hong A."/>
            <person name="Huizar L."/>
            <person name="Hyman R.W."/>
            <person name="Jones T."/>
            <person name="Kahn D."/>
            <person name="Kahn M.L."/>
            <person name="Kalman S."/>
            <person name="Keating D.H."/>
            <person name="Kiss E."/>
            <person name="Komp C."/>
            <person name="Lelaure V."/>
            <person name="Masuy D."/>
            <person name="Palm C."/>
            <person name="Peck M.C."/>
            <person name="Pohl T.M."/>
            <person name="Portetelle D."/>
            <person name="Purnelle B."/>
            <person name="Ramsperger U."/>
            <person name="Surzycki R."/>
            <person name="Thebault P."/>
            <person name="Vandenbol M."/>
            <person name="Vorhoelter F.J."/>
            <person name="Weidner S."/>
            <person name="Wells D.H."/>
            <person name="Wong K."/>
            <person name="Yeh K.-C."/>
            <person name="Batut J."/>
        </authorList>
    </citation>
    <scope>NUCLEOTIDE SEQUENCE [LARGE SCALE GENOMIC DNA]</scope>
    <source>
        <strain>1021</strain>
    </source>
</reference>
<comment type="function">
    <text evidence="1">One of the primary rRNA binding proteins. Required for association of the 30S and 50S subunits to form the 70S ribosome, for tRNA binding and peptide bond formation. It has been suggested to have peptidyltransferase activity; this is somewhat controversial. Makes several contacts with the 16S rRNA in the 70S ribosome.</text>
</comment>
<comment type="subunit">
    <text evidence="1">Part of the 50S ribosomal subunit. Forms a bridge to the 30S subunit in the 70S ribosome.</text>
</comment>
<comment type="similarity">
    <text evidence="1">Belongs to the universal ribosomal protein uL2 family.</text>
</comment>
<sequence>MALKSFNPTTPSQRQLVIVSRAGLYKGKPVKTLTEGLSSKGGRNNLGRITVRFQGGGHKRTYRLVDFKRRKFDVEGTVERLEYDPNRTAFIALVNYADGEQAYILAPQRLAVGDKVIASEKAVDVKPGNAMPLQFIPVGSIIHNVEMKPGKGGQIARSAGTYAQLVGRDQGMAILRLNSGEQRLVHGSCLASIGAVSNPDHGNINDGKAGRSRWRGKRPHVRGVVMNPVDHPHGGGEGRTSGGRHPVTPWGKPTKGKRTRSNKSTDKFIMRSRHQRKK</sequence>
<organism>
    <name type="scientific">Rhizobium meliloti (strain 1021)</name>
    <name type="common">Ensifer meliloti</name>
    <name type="synonym">Sinorhizobium meliloti</name>
    <dbReference type="NCBI Taxonomy" id="266834"/>
    <lineage>
        <taxon>Bacteria</taxon>
        <taxon>Pseudomonadati</taxon>
        <taxon>Pseudomonadota</taxon>
        <taxon>Alphaproteobacteria</taxon>
        <taxon>Hyphomicrobiales</taxon>
        <taxon>Rhizobiaceae</taxon>
        <taxon>Sinorhizobium/Ensifer group</taxon>
        <taxon>Sinorhizobium</taxon>
    </lineage>
</organism>
<evidence type="ECO:0000255" key="1">
    <source>
        <dbReference type="HAMAP-Rule" id="MF_01320"/>
    </source>
</evidence>
<evidence type="ECO:0000256" key="2">
    <source>
        <dbReference type="SAM" id="MobiDB-lite"/>
    </source>
</evidence>
<evidence type="ECO:0000305" key="3"/>
<feature type="chain" id="PRO_0000129604" description="Large ribosomal subunit protein uL2">
    <location>
        <begin position="1"/>
        <end position="278"/>
    </location>
</feature>
<feature type="region of interest" description="Disordered" evidence="2">
    <location>
        <begin position="201"/>
        <end position="278"/>
    </location>
</feature>
<feature type="compositionally biased region" description="Basic residues" evidence="2">
    <location>
        <begin position="210"/>
        <end position="221"/>
    </location>
</feature>
<protein>
    <recommendedName>
        <fullName evidence="1">Large ribosomal subunit protein uL2</fullName>
    </recommendedName>
    <alternativeName>
        <fullName evidence="3">50S ribosomal protein L2</fullName>
    </alternativeName>
</protein>
<name>RL2_RHIME</name>
<accession>Q92QG7</accession>
<proteinExistence type="inferred from homology"/>
<keyword id="KW-1185">Reference proteome</keyword>
<keyword id="KW-0687">Ribonucleoprotein</keyword>
<keyword id="KW-0689">Ribosomal protein</keyword>
<keyword id="KW-0694">RNA-binding</keyword>
<keyword id="KW-0699">rRNA-binding</keyword>
<gene>
    <name evidence="1" type="primary">rplB</name>
    <name type="ordered locus">R01359</name>
    <name type="ORF">SMc01306</name>
</gene>
<dbReference type="EMBL" id="AL591688">
    <property type="protein sequence ID" value="CAC45938.1"/>
    <property type="molecule type" value="Genomic_DNA"/>
</dbReference>
<dbReference type="RefSeq" id="NP_385465.1">
    <property type="nucleotide sequence ID" value="NC_003047.1"/>
</dbReference>
<dbReference type="RefSeq" id="WP_003536619.1">
    <property type="nucleotide sequence ID" value="NC_003047.1"/>
</dbReference>
<dbReference type="SMR" id="Q92QG7"/>
<dbReference type="EnsemblBacteria" id="CAC45938">
    <property type="protein sequence ID" value="CAC45938"/>
    <property type="gene ID" value="SMc01306"/>
</dbReference>
<dbReference type="GeneID" id="61614927"/>
<dbReference type="KEGG" id="sme:SMc01306"/>
<dbReference type="PATRIC" id="fig|266834.11.peg.2775"/>
<dbReference type="eggNOG" id="COG0090">
    <property type="taxonomic scope" value="Bacteria"/>
</dbReference>
<dbReference type="HOGENOM" id="CLU_036235_2_1_5"/>
<dbReference type="OrthoDB" id="9778722at2"/>
<dbReference type="Proteomes" id="UP000001976">
    <property type="component" value="Chromosome"/>
</dbReference>
<dbReference type="GO" id="GO:0015934">
    <property type="term" value="C:large ribosomal subunit"/>
    <property type="evidence" value="ECO:0007669"/>
    <property type="project" value="InterPro"/>
</dbReference>
<dbReference type="GO" id="GO:0019843">
    <property type="term" value="F:rRNA binding"/>
    <property type="evidence" value="ECO:0007669"/>
    <property type="project" value="UniProtKB-UniRule"/>
</dbReference>
<dbReference type="GO" id="GO:0003735">
    <property type="term" value="F:structural constituent of ribosome"/>
    <property type="evidence" value="ECO:0007669"/>
    <property type="project" value="InterPro"/>
</dbReference>
<dbReference type="GO" id="GO:0016740">
    <property type="term" value="F:transferase activity"/>
    <property type="evidence" value="ECO:0007669"/>
    <property type="project" value="InterPro"/>
</dbReference>
<dbReference type="GO" id="GO:0002181">
    <property type="term" value="P:cytoplasmic translation"/>
    <property type="evidence" value="ECO:0007669"/>
    <property type="project" value="TreeGrafter"/>
</dbReference>
<dbReference type="FunFam" id="2.30.30.30:FF:000001">
    <property type="entry name" value="50S ribosomal protein L2"/>
    <property type="match status" value="1"/>
</dbReference>
<dbReference type="FunFam" id="2.40.50.140:FF:000003">
    <property type="entry name" value="50S ribosomal protein L2"/>
    <property type="match status" value="1"/>
</dbReference>
<dbReference type="FunFam" id="4.10.950.10:FF:000001">
    <property type="entry name" value="50S ribosomal protein L2"/>
    <property type="match status" value="1"/>
</dbReference>
<dbReference type="Gene3D" id="2.30.30.30">
    <property type="match status" value="1"/>
</dbReference>
<dbReference type="Gene3D" id="2.40.50.140">
    <property type="entry name" value="Nucleic acid-binding proteins"/>
    <property type="match status" value="1"/>
</dbReference>
<dbReference type="Gene3D" id="4.10.950.10">
    <property type="entry name" value="Ribosomal protein L2, domain 3"/>
    <property type="match status" value="1"/>
</dbReference>
<dbReference type="HAMAP" id="MF_01320_B">
    <property type="entry name" value="Ribosomal_uL2_B"/>
    <property type="match status" value="1"/>
</dbReference>
<dbReference type="InterPro" id="IPR012340">
    <property type="entry name" value="NA-bd_OB-fold"/>
</dbReference>
<dbReference type="InterPro" id="IPR014722">
    <property type="entry name" value="Rib_uL2_dom2"/>
</dbReference>
<dbReference type="InterPro" id="IPR002171">
    <property type="entry name" value="Ribosomal_uL2"/>
</dbReference>
<dbReference type="InterPro" id="IPR005880">
    <property type="entry name" value="Ribosomal_uL2_bac/org-type"/>
</dbReference>
<dbReference type="InterPro" id="IPR022669">
    <property type="entry name" value="Ribosomal_uL2_C"/>
</dbReference>
<dbReference type="InterPro" id="IPR022671">
    <property type="entry name" value="Ribosomal_uL2_CS"/>
</dbReference>
<dbReference type="InterPro" id="IPR014726">
    <property type="entry name" value="Ribosomal_uL2_dom3"/>
</dbReference>
<dbReference type="InterPro" id="IPR022666">
    <property type="entry name" value="Ribosomal_uL2_RNA-bd_dom"/>
</dbReference>
<dbReference type="InterPro" id="IPR008991">
    <property type="entry name" value="Translation_prot_SH3-like_sf"/>
</dbReference>
<dbReference type="NCBIfam" id="TIGR01171">
    <property type="entry name" value="rplB_bact"/>
    <property type="match status" value="1"/>
</dbReference>
<dbReference type="PANTHER" id="PTHR13691:SF5">
    <property type="entry name" value="LARGE RIBOSOMAL SUBUNIT PROTEIN UL2M"/>
    <property type="match status" value="1"/>
</dbReference>
<dbReference type="PANTHER" id="PTHR13691">
    <property type="entry name" value="RIBOSOMAL PROTEIN L2"/>
    <property type="match status" value="1"/>
</dbReference>
<dbReference type="Pfam" id="PF00181">
    <property type="entry name" value="Ribosomal_L2"/>
    <property type="match status" value="1"/>
</dbReference>
<dbReference type="Pfam" id="PF03947">
    <property type="entry name" value="Ribosomal_L2_C"/>
    <property type="match status" value="1"/>
</dbReference>
<dbReference type="PIRSF" id="PIRSF002158">
    <property type="entry name" value="Ribosomal_L2"/>
    <property type="match status" value="1"/>
</dbReference>
<dbReference type="SMART" id="SM01383">
    <property type="entry name" value="Ribosomal_L2"/>
    <property type="match status" value="1"/>
</dbReference>
<dbReference type="SMART" id="SM01382">
    <property type="entry name" value="Ribosomal_L2_C"/>
    <property type="match status" value="1"/>
</dbReference>
<dbReference type="SUPFAM" id="SSF50249">
    <property type="entry name" value="Nucleic acid-binding proteins"/>
    <property type="match status" value="1"/>
</dbReference>
<dbReference type="SUPFAM" id="SSF50104">
    <property type="entry name" value="Translation proteins SH3-like domain"/>
    <property type="match status" value="1"/>
</dbReference>
<dbReference type="PROSITE" id="PS00467">
    <property type="entry name" value="RIBOSOMAL_L2"/>
    <property type="match status" value="1"/>
</dbReference>